<comment type="function">
    <text evidence="1">Involved in the regulation of the intracellular balance of NAD and NADP, and is a key enzyme in the biosynthesis of NADP. Catalyzes specifically the phosphorylation on 2'-hydroxyl of the adenosine moiety of NAD to yield NADP.</text>
</comment>
<comment type="catalytic activity">
    <reaction evidence="1">
        <text>NAD(+) + ATP = ADP + NADP(+) + H(+)</text>
        <dbReference type="Rhea" id="RHEA:18629"/>
        <dbReference type="ChEBI" id="CHEBI:15378"/>
        <dbReference type="ChEBI" id="CHEBI:30616"/>
        <dbReference type="ChEBI" id="CHEBI:57540"/>
        <dbReference type="ChEBI" id="CHEBI:58349"/>
        <dbReference type="ChEBI" id="CHEBI:456216"/>
        <dbReference type="EC" id="2.7.1.23"/>
    </reaction>
</comment>
<comment type="cofactor">
    <cofactor evidence="1">
        <name>a divalent metal cation</name>
        <dbReference type="ChEBI" id="CHEBI:60240"/>
    </cofactor>
</comment>
<comment type="subcellular location">
    <subcellularLocation>
        <location evidence="1">Cytoplasm</location>
    </subcellularLocation>
</comment>
<comment type="similarity">
    <text evidence="1">Belongs to the NAD kinase family.</text>
</comment>
<dbReference type="EC" id="2.7.1.23" evidence="1"/>
<dbReference type="EMBL" id="CP001337">
    <property type="protein sequence ID" value="ACL24494.1"/>
    <property type="molecule type" value="Genomic_DNA"/>
</dbReference>
<dbReference type="RefSeq" id="WP_015940353.1">
    <property type="nucleotide sequence ID" value="NC_011831.1"/>
</dbReference>
<dbReference type="SMR" id="B8G9X9"/>
<dbReference type="STRING" id="326427.Cagg_1593"/>
<dbReference type="KEGG" id="cag:Cagg_1593"/>
<dbReference type="eggNOG" id="COG0061">
    <property type="taxonomic scope" value="Bacteria"/>
</dbReference>
<dbReference type="HOGENOM" id="CLU_008831_0_0_0"/>
<dbReference type="OrthoDB" id="9774737at2"/>
<dbReference type="Proteomes" id="UP000002508">
    <property type="component" value="Chromosome"/>
</dbReference>
<dbReference type="GO" id="GO:0005737">
    <property type="term" value="C:cytoplasm"/>
    <property type="evidence" value="ECO:0007669"/>
    <property type="project" value="UniProtKB-SubCell"/>
</dbReference>
<dbReference type="GO" id="GO:0005524">
    <property type="term" value="F:ATP binding"/>
    <property type="evidence" value="ECO:0007669"/>
    <property type="project" value="UniProtKB-KW"/>
</dbReference>
<dbReference type="GO" id="GO:0046872">
    <property type="term" value="F:metal ion binding"/>
    <property type="evidence" value="ECO:0007669"/>
    <property type="project" value="UniProtKB-UniRule"/>
</dbReference>
<dbReference type="GO" id="GO:0051287">
    <property type="term" value="F:NAD binding"/>
    <property type="evidence" value="ECO:0007669"/>
    <property type="project" value="UniProtKB-ARBA"/>
</dbReference>
<dbReference type="GO" id="GO:0003951">
    <property type="term" value="F:NAD+ kinase activity"/>
    <property type="evidence" value="ECO:0007669"/>
    <property type="project" value="UniProtKB-UniRule"/>
</dbReference>
<dbReference type="GO" id="GO:0019674">
    <property type="term" value="P:NAD metabolic process"/>
    <property type="evidence" value="ECO:0007669"/>
    <property type="project" value="InterPro"/>
</dbReference>
<dbReference type="GO" id="GO:0006741">
    <property type="term" value="P:NADP biosynthetic process"/>
    <property type="evidence" value="ECO:0007669"/>
    <property type="project" value="UniProtKB-UniRule"/>
</dbReference>
<dbReference type="Gene3D" id="3.40.50.10330">
    <property type="entry name" value="Probable inorganic polyphosphate/atp-NAD kinase, domain 1"/>
    <property type="match status" value="1"/>
</dbReference>
<dbReference type="Gene3D" id="2.60.200.30">
    <property type="entry name" value="Probable inorganic polyphosphate/atp-NAD kinase, domain 2"/>
    <property type="match status" value="1"/>
</dbReference>
<dbReference type="HAMAP" id="MF_00361">
    <property type="entry name" value="NAD_kinase"/>
    <property type="match status" value="1"/>
</dbReference>
<dbReference type="InterPro" id="IPR017438">
    <property type="entry name" value="ATP-NAD_kinase_N"/>
</dbReference>
<dbReference type="InterPro" id="IPR017437">
    <property type="entry name" value="ATP-NAD_kinase_PpnK-typ_C"/>
</dbReference>
<dbReference type="InterPro" id="IPR016064">
    <property type="entry name" value="NAD/diacylglycerol_kinase_sf"/>
</dbReference>
<dbReference type="InterPro" id="IPR002504">
    <property type="entry name" value="NADK"/>
</dbReference>
<dbReference type="PANTHER" id="PTHR20275">
    <property type="entry name" value="NAD KINASE"/>
    <property type="match status" value="1"/>
</dbReference>
<dbReference type="PANTHER" id="PTHR20275:SF0">
    <property type="entry name" value="NAD KINASE"/>
    <property type="match status" value="1"/>
</dbReference>
<dbReference type="Pfam" id="PF01513">
    <property type="entry name" value="NAD_kinase"/>
    <property type="match status" value="1"/>
</dbReference>
<dbReference type="Pfam" id="PF20143">
    <property type="entry name" value="NAD_kinase_C"/>
    <property type="match status" value="1"/>
</dbReference>
<dbReference type="SUPFAM" id="SSF111331">
    <property type="entry name" value="NAD kinase/diacylglycerol kinase-like"/>
    <property type="match status" value="1"/>
</dbReference>
<keyword id="KW-0067">ATP-binding</keyword>
<keyword id="KW-0963">Cytoplasm</keyword>
<keyword id="KW-0418">Kinase</keyword>
<keyword id="KW-0520">NAD</keyword>
<keyword id="KW-0521">NADP</keyword>
<keyword id="KW-0547">Nucleotide-binding</keyword>
<keyword id="KW-0808">Transferase</keyword>
<gene>
    <name evidence="1" type="primary">nadK</name>
    <name type="ordered locus">Cagg_1593</name>
</gene>
<accession>B8G9X9</accession>
<proteinExistence type="inferred from homology"/>
<name>NADK_CHLAD</name>
<reference key="1">
    <citation type="submission" date="2008-12" db="EMBL/GenBank/DDBJ databases">
        <title>Complete sequence of Chloroflexus aggregans DSM 9485.</title>
        <authorList>
            <consortium name="US DOE Joint Genome Institute"/>
            <person name="Lucas S."/>
            <person name="Copeland A."/>
            <person name="Lapidus A."/>
            <person name="Glavina del Rio T."/>
            <person name="Dalin E."/>
            <person name="Tice H."/>
            <person name="Pitluck S."/>
            <person name="Foster B."/>
            <person name="Larimer F."/>
            <person name="Land M."/>
            <person name="Hauser L."/>
            <person name="Kyrpides N."/>
            <person name="Mikhailova N."/>
            <person name="Bryant D.A."/>
            <person name="Richardson P."/>
        </authorList>
    </citation>
    <scope>NUCLEOTIDE SEQUENCE [LARGE SCALE GENOMIC DNA]</scope>
    <source>
        <strain>MD-66 / DSM 9485</strain>
    </source>
</reference>
<sequence>MLERVAVLYNPLSDASIKLSRELTDWLIARGIKTRRGVSQEFRDQPQLVADCDLMIALGGDGTVLRAARLCFPHNIPVLPVALGHLSFMAEIGPEEVYSGCEQIMNGGGWFDERTLVRAQLWRNGQKLGQHTALNEVVISRSDISRIVNVHVTIDDSPLTTYHADGVIVATATGSTAYALAAGGPIVDPRSQALVLVPIAAHLTNIPSMVLHEDAVVTMQLRSRHHALLAVDGRENIDLIEGDEVVVRRSPQVCTFVRLRPSNQFYTQLVARLRRS</sequence>
<organism>
    <name type="scientific">Chloroflexus aggregans (strain MD-66 / DSM 9485)</name>
    <dbReference type="NCBI Taxonomy" id="326427"/>
    <lineage>
        <taxon>Bacteria</taxon>
        <taxon>Bacillati</taxon>
        <taxon>Chloroflexota</taxon>
        <taxon>Chloroflexia</taxon>
        <taxon>Chloroflexales</taxon>
        <taxon>Chloroflexineae</taxon>
        <taxon>Chloroflexaceae</taxon>
        <taxon>Chloroflexus</taxon>
    </lineage>
</organism>
<feature type="chain" id="PRO_1000133562" description="NAD kinase">
    <location>
        <begin position="1"/>
        <end position="276"/>
    </location>
</feature>
<feature type="active site" description="Proton acceptor" evidence="1">
    <location>
        <position position="61"/>
    </location>
</feature>
<feature type="binding site" evidence="1">
    <location>
        <begin position="61"/>
        <end position="62"/>
    </location>
    <ligand>
        <name>NAD(+)</name>
        <dbReference type="ChEBI" id="CHEBI:57540"/>
    </ligand>
</feature>
<feature type="binding site" evidence="1">
    <location>
        <position position="66"/>
    </location>
    <ligand>
        <name>NAD(+)</name>
        <dbReference type="ChEBI" id="CHEBI:57540"/>
    </ligand>
</feature>
<feature type="binding site" evidence="1">
    <location>
        <begin position="135"/>
        <end position="136"/>
    </location>
    <ligand>
        <name>NAD(+)</name>
        <dbReference type="ChEBI" id="CHEBI:57540"/>
    </ligand>
</feature>
<feature type="binding site" evidence="1">
    <location>
        <position position="146"/>
    </location>
    <ligand>
        <name>NAD(+)</name>
        <dbReference type="ChEBI" id="CHEBI:57540"/>
    </ligand>
</feature>
<feature type="binding site" evidence="1">
    <location>
        <position position="163"/>
    </location>
    <ligand>
        <name>NAD(+)</name>
        <dbReference type="ChEBI" id="CHEBI:57540"/>
    </ligand>
</feature>
<feature type="binding site" evidence="1">
    <location>
        <position position="165"/>
    </location>
    <ligand>
        <name>NAD(+)</name>
        <dbReference type="ChEBI" id="CHEBI:57540"/>
    </ligand>
</feature>
<feature type="binding site" evidence="1">
    <location>
        <position position="200"/>
    </location>
    <ligand>
        <name>NAD(+)</name>
        <dbReference type="ChEBI" id="CHEBI:57540"/>
    </ligand>
</feature>
<protein>
    <recommendedName>
        <fullName evidence="1">NAD kinase</fullName>
        <ecNumber evidence="1">2.7.1.23</ecNumber>
    </recommendedName>
    <alternativeName>
        <fullName evidence="1">ATP-dependent NAD kinase</fullName>
    </alternativeName>
</protein>
<evidence type="ECO:0000255" key="1">
    <source>
        <dbReference type="HAMAP-Rule" id="MF_00361"/>
    </source>
</evidence>